<keyword id="KW-0963">Cytoplasm</keyword>
<keyword id="KW-0227">DNA damage</keyword>
<keyword id="KW-0228">DNA excision</keyword>
<keyword id="KW-0234">DNA repair</keyword>
<keyword id="KW-0267">Excision nuclease</keyword>
<keyword id="KW-0742">SOS response</keyword>
<name>UVRC_STAAM</name>
<accession>P67428</accession>
<accession>Q99UW0</accession>
<comment type="function">
    <text evidence="1">The UvrABC repair system catalyzes the recognition and processing of DNA lesions. UvrC both incises the 5' and 3' sides of the lesion. The N-terminal half is responsible for the 3' incision and the C-terminal half is responsible for the 5' incision.</text>
</comment>
<comment type="subunit">
    <text evidence="1">Interacts with UvrB in an incision complex.</text>
</comment>
<comment type="subcellular location">
    <subcellularLocation>
        <location evidence="1">Cytoplasm</location>
    </subcellularLocation>
</comment>
<comment type="similarity">
    <text evidence="1">Belongs to the UvrC family.</text>
</comment>
<sequence>MEDYKQRIKNKLNVVPMEPGCYLMKDRNDQVIYVGKAKKLRNRLRSYFTGAHDAKTTRLVGEIRRFEFIVTSSETESLLLELNLIKQYQPRYNILLKDDKSYPFIKITKEKYPRLLVTRTVKQGTGKYFGPYPNAYSAQETKKLLDRIYPYRKCDKMPDKLCLYYHIGQCLGPCVYDVDLSKYAQMTKEITDFLNGEDKTILKSLEERMLTASESLDFERAKEYRDLIQHIQNLTNKQKIMSSDKTIRDVFGYCVDKGWMCIQVFFIRQGNMIKRDTTMIPLQQTEEEEFYTFIGQFYSLNQHILPKEVHVPRNLDKEMIQSVVDTKIVQPARGPKKDMVDLAAHNAKVSLNNKFELISRDESRTIKAIEELGTQMGIQTPIRIEAFDNSNIQGVDPVSAMVTFVDGKPDKKNYRKYKIKTVKGPDDYKSMREVVRRRYSRVLNEGLPLPDLIIVDGGKGHMNGVIDVLQNELGLDIPVAGLQKNDKHQTSELLYGASAEIVPLKKNSQAFYLLHRIQDEVHRFAITFHRQTRQKTGLKSILDDIDGIGNKRKTLLLRSFGSIKKMKEATLEDFKNIGIPENVAKNLHEQLHK</sequence>
<dbReference type="EMBL" id="BA000017">
    <property type="protein sequence ID" value="BAB57308.1"/>
    <property type="molecule type" value="Genomic_DNA"/>
</dbReference>
<dbReference type="RefSeq" id="WP_000390524.1">
    <property type="nucleotide sequence ID" value="NC_002758.2"/>
</dbReference>
<dbReference type="SMR" id="P67428"/>
<dbReference type="KEGG" id="sav:SAV1146"/>
<dbReference type="HOGENOM" id="CLU_014841_3_2_9"/>
<dbReference type="PhylomeDB" id="P67428"/>
<dbReference type="Proteomes" id="UP000002481">
    <property type="component" value="Chromosome"/>
</dbReference>
<dbReference type="GO" id="GO:0005737">
    <property type="term" value="C:cytoplasm"/>
    <property type="evidence" value="ECO:0007669"/>
    <property type="project" value="UniProtKB-SubCell"/>
</dbReference>
<dbReference type="GO" id="GO:0009380">
    <property type="term" value="C:excinuclease repair complex"/>
    <property type="evidence" value="ECO:0007669"/>
    <property type="project" value="InterPro"/>
</dbReference>
<dbReference type="GO" id="GO:0003677">
    <property type="term" value="F:DNA binding"/>
    <property type="evidence" value="ECO:0007669"/>
    <property type="project" value="UniProtKB-UniRule"/>
</dbReference>
<dbReference type="GO" id="GO:0009381">
    <property type="term" value="F:excinuclease ABC activity"/>
    <property type="evidence" value="ECO:0007669"/>
    <property type="project" value="UniProtKB-UniRule"/>
</dbReference>
<dbReference type="GO" id="GO:0006289">
    <property type="term" value="P:nucleotide-excision repair"/>
    <property type="evidence" value="ECO:0007669"/>
    <property type="project" value="UniProtKB-UniRule"/>
</dbReference>
<dbReference type="GO" id="GO:0009432">
    <property type="term" value="P:SOS response"/>
    <property type="evidence" value="ECO:0007669"/>
    <property type="project" value="UniProtKB-UniRule"/>
</dbReference>
<dbReference type="CDD" id="cd10434">
    <property type="entry name" value="GIY-YIG_UvrC_Cho"/>
    <property type="match status" value="1"/>
</dbReference>
<dbReference type="FunFam" id="3.30.420.340:FF:000002">
    <property type="entry name" value="UvrABC system protein C"/>
    <property type="match status" value="1"/>
</dbReference>
<dbReference type="FunFam" id="3.40.1440.10:FF:000001">
    <property type="entry name" value="UvrABC system protein C"/>
    <property type="match status" value="1"/>
</dbReference>
<dbReference type="FunFam" id="4.10.860.10:FF:000007">
    <property type="entry name" value="UvrABC system protein C"/>
    <property type="match status" value="1"/>
</dbReference>
<dbReference type="Gene3D" id="1.10.150.20">
    <property type="entry name" value="5' to 3' exonuclease, C-terminal subdomain"/>
    <property type="match status" value="1"/>
</dbReference>
<dbReference type="Gene3D" id="3.40.1440.10">
    <property type="entry name" value="GIY-YIG endonuclease"/>
    <property type="match status" value="1"/>
</dbReference>
<dbReference type="Gene3D" id="4.10.860.10">
    <property type="entry name" value="UVR domain"/>
    <property type="match status" value="1"/>
</dbReference>
<dbReference type="Gene3D" id="3.30.420.340">
    <property type="entry name" value="UvrC, RNAse H endonuclease domain"/>
    <property type="match status" value="1"/>
</dbReference>
<dbReference type="HAMAP" id="MF_00203">
    <property type="entry name" value="UvrC"/>
    <property type="match status" value="1"/>
</dbReference>
<dbReference type="InterPro" id="IPR000305">
    <property type="entry name" value="GIY-YIG_endonuc"/>
</dbReference>
<dbReference type="InterPro" id="IPR035901">
    <property type="entry name" value="GIY-YIG_endonuc_sf"/>
</dbReference>
<dbReference type="InterPro" id="IPR047296">
    <property type="entry name" value="GIY-YIG_UvrC_Cho"/>
</dbReference>
<dbReference type="InterPro" id="IPR010994">
    <property type="entry name" value="RuvA_2-like"/>
</dbReference>
<dbReference type="InterPro" id="IPR001943">
    <property type="entry name" value="UVR_dom"/>
</dbReference>
<dbReference type="InterPro" id="IPR036876">
    <property type="entry name" value="UVR_dom_sf"/>
</dbReference>
<dbReference type="InterPro" id="IPR050066">
    <property type="entry name" value="UvrABC_protein_C"/>
</dbReference>
<dbReference type="InterPro" id="IPR004791">
    <property type="entry name" value="UvrC"/>
</dbReference>
<dbReference type="InterPro" id="IPR001162">
    <property type="entry name" value="UvrC_RNase_H_dom"/>
</dbReference>
<dbReference type="InterPro" id="IPR038476">
    <property type="entry name" value="UvrC_RNase_H_dom_sf"/>
</dbReference>
<dbReference type="NCBIfam" id="TIGR00194">
    <property type="entry name" value="uvrC"/>
    <property type="match status" value="1"/>
</dbReference>
<dbReference type="PANTHER" id="PTHR30562:SF1">
    <property type="entry name" value="UVRABC SYSTEM PROTEIN C"/>
    <property type="match status" value="1"/>
</dbReference>
<dbReference type="PANTHER" id="PTHR30562">
    <property type="entry name" value="UVRC/OXIDOREDUCTASE"/>
    <property type="match status" value="1"/>
</dbReference>
<dbReference type="Pfam" id="PF01541">
    <property type="entry name" value="GIY-YIG"/>
    <property type="match status" value="1"/>
</dbReference>
<dbReference type="Pfam" id="PF02151">
    <property type="entry name" value="UVR"/>
    <property type="match status" value="1"/>
</dbReference>
<dbReference type="Pfam" id="PF22920">
    <property type="entry name" value="UvrC_RNaseH"/>
    <property type="match status" value="1"/>
</dbReference>
<dbReference type="Pfam" id="PF08459">
    <property type="entry name" value="UvrC_RNaseH_dom"/>
    <property type="match status" value="1"/>
</dbReference>
<dbReference type="SMART" id="SM00465">
    <property type="entry name" value="GIYc"/>
    <property type="match status" value="1"/>
</dbReference>
<dbReference type="SUPFAM" id="SSF46600">
    <property type="entry name" value="C-terminal UvrC-binding domain of UvrB"/>
    <property type="match status" value="1"/>
</dbReference>
<dbReference type="SUPFAM" id="SSF82771">
    <property type="entry name" value="GIY-YIG endonuclease"/>
    <property type="match status" value="1"/>
</dbReference>
<dbReference type="SUPFAM" id="SSF47781">
    <property type="entry name" value="RuvA domain 2-like"/>
    <property type="match status" value="1"/>
</dbReference>
<dbReference type="PROSITE" id="PS50164">
    <property type="entry name" value="GIY_YIG"/>
    <property type="match status" value="1"/>
</dbReference>
<dbReference type="PROSITE" id="PS50151">
    <property type="entry name" value="UVR"/>
    <property type="match status" value="1"/>
</dbReference>
<dbReference type="PROSITE" id="PS50165">
    <property type="entry name" value="UVRC"/>
    <property type="match status" value="1"/>
</dbReference>
<evidence type="ECO:0000255" key="1">
    <source>
        <dbReference type="HAMAP-Rule" id="MF_00203"/>
    </source>
</evidence>
<protein>
    <recommendedName>
        <fullName evidence="1">UvrABC system protein C</fullName>
        <shortName evidence="1">Protein UvrC</shortName>
    </recommendedName>
    <alternativeName>
        <fullName evidence="1">Excinuclease ABC subunit C</fullName>
    </alternativeName>
</protein>
<organism>
    <name type="scientific">Staphylococcus aureus (strain Mu50 / ATCC 700699)</name>
    <dbReference type="NCBI Taxonomy" id="158878"/>
    <lineage>
        <taxon>Bacteria</taxon>
        <taxon>Bacillati</taxon>
        <taxon>Bacillota</taxon>
        <taxon>Bacilli</taxon>
        <taxon>Bacillales</taxon>
        <taxon>Staphylococcaceae</taxon>
        <taxon>Staphylococcus</taxon>
    </lineage>
</organism>
<gene>
    <name evidence="1" type="primary">uvrC</name>
    <name type="ordered locus">SAV1146</name>
</gene>
<proteinExistence type="inferred from homology"/>
<feature type="chain" id="PRO_0000138337" description="UvrABC system protein C">
    <location>
        <begin position="1"/>
        <end position="593"/>
    </location>
</feature>
<feature type="domain" description="GIY-YIG" evidence="1">
    <location>
        <begin position="17"/>
        <end position="94"/>
    </location>
</feature>
<feature type="domain" description="UVR" evidence="1">
    <location>
        <begin position="199"/>
        <end position="234"/>
    </location>
</feature>
<reference key="1">
    <citation type="journal article" date="2001" name="Lancet">
        <title>Whole genome sequencing of meticillin-resistant Staphylococcus aureus.</title>
        <authorList>
            <person name="Kuroda M."/>
            <person name="Ohta T."/>
            <person name="Uchiyama I."/>
            <person name="Baba T."/>
            <person name="Yuzawa H."/>
            <person name="Kobayashi I."/>
            <person name="Cui L."/>
            <person name="Oguchi A."/>
            <person name="Aoki K."/>
            <person name="Nagai Y."/>
            <person name="Lian J.-Q."/>
            <person name="Ito T."/>
            <person name="Kanamori M."/>
            <person name="Matsumaru H."/>
            <person name="Maruyama A."/>
            <person name="Murakami H."/>
            <person name="Hosoyama A."/>
            <person name="Mizutani-Ui Y."/>
            <person name="Takahashi N.K."/>
            <person name="Sawano T."/>
            <person name="Inoue R."/>
            <person name="Kaito C."/>
            <person name="Sekimizu K."/>
            <person name="Hirakawa H."/>
            <person name="Kuhara S."/>
            <person name="Goto S."/>
            <person name="Yabuzaki J."/>
            <person name="Kanehisa M."/>
            <person name="Yamashita A."/>
            <person name="Oshima K."/>
            <person name="Furuya K."/>
            <person name="Yoshino C."/>
            <person name="Shiba T."/>
            <person name="Hattori M."/>
            <person name="Ogasawara N."/>
            <person name="Hayashi H."/>
            <person name="Hiramatsu K."/>
        </authorList>
    </citation>
    <scope>NUCLEOTIDE SEQUENCE [LARGE SCALE GENOMIC DNA]</scope>
    <source>
        <strain>Mu50 / ATCC 700699</strain>
    </source>
</reference>